<evidence type="ECO:0000255" key="1"/>
<evidence type="ECO:0000305" key="2"/>
<accession>Q5L6T1</accession>
<sequence>MAGESTNSVGNDITSLIQPGLDQVIQDEGVQVTLINSILGWCRIHIINPVKSSKIVKSRAFQITMIVLGIILLIAGLALTFVLQGQLGNNAFLFLIPAVIGLVKLLATSVFMEKPCTPEKWRLCKRLLATTEDILDDGQINQSNTIFTMDSSESTNAAAS</sequence>
<feature type="chain" id="PRO_0000248630" description="Sulfur-rich protein">
    <location>
        <begin position="1"/>
        <end position="160"/>
    </location>
</feature>
<feature type="transmembrane region" description="Helical" evidence="1">
    <location>
        <begin position="63"/>
        <end position="83"/>
    </location>
</feature>
<feature type="transmembrane region" description="Helical" evidence="1">
    <location>
        <begin position="92"/>
        <end position="112"/>
    </location>
</feature>
<protein>
    <recommendedName>
        <fullName>Sulfur-rich protein</fullName>
    </recommendedName>
</protein>
<reference key="1">
    <citation type="journal article" date="2005" name="Genome Res.">
        <title>The Chlamydophila abortus genome sequence reveals an array of variable proteins that contribute to interspecies variation.</title>
        <authorList>
            <person name="Thomson N.R."/>
            <person name="Yeats C."/>
            <person name="Bell K."/>
            <person name="Holden M.T.G."/>
            <person name="Bentley S.D."/>
            <person name="Livingstone M."/>
            <person name="Cerdeno-Tarraga A.-M."/>
            <person name="Harris B."/>
            <person name="Doggett J."/>
            <person name="Ormond D."/>
            <person name="Mungall K."/>
            <person name="Clarke K."/>
            <person name="Feltwell T."/>
            <person name="Hance Z."/>
            <person name="Sanders M."/>
            <person name="Quail M.A."/>
            <person name="Price C."/>
            <person name="Barrell B.G."/>
            <person name="Parkhill J."/>
            <person name="Longbottom D."/>
        </authorList>
    </citation>
    <scope>NUCLEOTIDE SEQUENCE [LARGE SCALE GENOMIC DNA]</scope>
    <source>
        <strain>DSM 27085 / S26/3</strain>
    </source>
</reference>
<keyword id="KW-0472">Membrane</keyword>
<keyword id="KW-0812">Transmembrane</keyword>
<keyword id="KW-1133">Transmembrane helix</keyword>
<name>SRPS_CHLAB</name>
<proteinExistence type="predicted"/>
<organism>
    <name type="scientific">Chlamydia abortus (strain DSM 27085 / S26/3)</name>
    <name type="common">Chlamydophila abortus</name>
    <dbReference type="NCBI Taxonomy" id="218497"/>
    <lineage>
        <taxon>Bacteria</taxon>
        <taxon>Pseudomonadati</taxon>
        <taxon>Chlamydiota</taxon>
        <taxon>Chlamydiia</taxon>
        <taxon>Chlamydiales</taxon>
        <taxon>Chlamydiaceae</taxon>
        <taxon>Chlamydia/Chlamydophila group</taxon>
        <taxon>Chlamydia</taxon>
    </lineage>
</organism>
<comment type="subcellular location">
    <subcellularLocation>
        <location evidence="2">Membrane</location>
        <topology evidence="2">Multi-pass membrane protein</topology>
    </subcellularLocation>
</comment>
<gene>
    <name type="primary">srp</name>
    <name type="ordered locus">CAB182</name>
</gene>
<dbReference type="EMBL" id="CR848038">
    <property type="protein sequence ID" value="CAH63640.1"/>
    <property type="molecule type" value="Genomic_DNA"/>
</dbReference>
<dbReference type="RefSeq" id="WP_011096886.1">
    <property type="nucleotide sequence ID" value="NC_004552.2"/>
</dbReference>
<dbReference type="SMR" id="Q5L6T1"/>
<dbReference type="KEGG" id="cab:CAB182"/>
<dbReference type="HOGENOM" id="CLU_1902939_0_0_0"/>
<dbReference type="OrthoDB" id="18131at2"/>
<dbReference type="Proteomes" id="UP000001012">
    <property type="component" value="Chromosome"/>
</dbReference>
<dbReference type="GO" id="GO:0019867">
    <property type="term" value="C:outer membrane"/>
    <property type="evidence" value="ECO:0007669"/>
    <property type="project" value="InterPro"/>
</dbReference>
<dbReference type="InterPro" id="IPR008436">
    <property type="entry name" value="CRPA"/>
</dbReference>
<dbReference type="Pfam" id="PF05745">
    <property type="entry name" value="CRPA"/>
    <property type="match status" value="1"/>
</dbReference>